<feature type="chain" id="PRO_0000228976" description="Protein arginine N-methyltransferase 2">
    <location>
        <begin position="1"/>
        <end position="440"/>
    </location>
</feature>
<feature type="domain" description="RMT2" evidence="2">
    <location>
        <begin position="192"/>
        <end position="440"/>
    </location>
</feature>
<feature type="region of interest" description="Disordered" evidence="3">
    <location>
        <begin position="147"/>
        <end position="194"/>
    </location>
</feature>
<feature type="compositionally biased region" description="Acidic residues" evidence="3">
    <location>
        <begin position="152"/>
        <end position="168"/>
    </location>
</feature>
<feature type="compositionally biased region" description="Basic and acidic residues" evidence="3">
    <location>
        <begin position="182"/>
        <end position="194"/>
    </location>
</feature>
<feature type="binding site" evidence="2">
    <location>
        <position position="201"/>
    </location>
    <ligand>
        <name>S-adenosyl-L-methionine</name>
        <dbReference type="ChEBI" id="CHEBI:59789"/>
    </ligand>
</feature>
<feature type="binding site" evidence="2">
    <location>
        <position position="230"/>
    </location>
    <ligand>
        <name>S-adenosyl-L-methionine</name>
        <dbReference type="ChEBI" id="CHEBI:59789"/>
    </ligand>
</feature>
<feature type="binding site" evidence="2">
    <location>
        <begin position="252"/>
        <end position="257"/>
    </location>
    <ligand>
        <name>S-adenosyl-L-methionine</name>
        <dbReference type="ChEBI" id="CHEBI:59789"/>
    </ligand>
</feature>
<feature type="binding site" evidence="2">
    <location>
        <begin position="273"/>
        <end position="275"/>
    </location>
    <ligand>
        <name>S-adenosyl-L-methionine</name>
        <dbReference type="ChEBI" id="CHEBI:59789"/>
    </ligand>
</feature>
<feature type="binding site" evidence="2">
    <location>
        <begin position="310"/>
        <end position="311"/>
    </location>
    <ligand>
        <name>S-adenosyl-L-methionine</name>
        <dbReference type="ChEBI" id="CHEBI:59789"/>
    </ligand>
</feature>
<feature type="binding site" evidence="2">
    <location>
        <position position="330"/>
    </location>
    <ligand>
        <name>S-adenosyl-L-methionine</name>
        <dbReference type="ChEBI" id="CHEBI:59789"/>
    </ligand>
</feature>
<evidence type="ECO:0000250" key="1">
    <source>
        <dbReference type="UniProtKB" id="Q03305"/>
    </source>
</evidence>
<evidence type="ECO:0000255" key="2">
    <source>
        <dbReference type="PROSITE-ProRule" id="PRU00892"/>
    </source>
</evidence>
<evidence type="ECO:0000256" key="3">
    <source>
        <dbReference type="SAM" id="MobiDB-lite"/>
    </source>
</evidence>
<name>RMT2_GIBZE</name>
<dbReference type="EC" id="2.1.1.-" evidence="1"/>
<dbReference type="EMBL" id="DS231663">
    <property type="protein sequence ID" value="ESU05690.1"/>
    <property type="molecule type" value="Genomic_DNA"/>
</dbReference>
<dbReference type="EMBL" id="HG970332">
    <property type="protein sequence ID" value="SCB64068.1"/>
    <property type="molecule type" value="Genomic_DNA"/>
</dbReference>
<dbReference type="RefSeq" id="XP_011316175.1">
    <property type="nucleotide sequence ID" value="XM_011317873.1"/>
</dbReference>
<dbReference type="SMR" id="Q4IQK7"/>
<dbReference type="FunCoup" id="Q4IQK7">
    <property type="interactions" value="393"/>
</dbReference>
<dbReference type="STRING" id="229533.Q4IQK7"/>
<dbReference type="GeneID" id="23547989"/>
<dbReference type="KEGG" id="fgr:FGSG_00501"/>
<dbReference type="VEuPathDB" id="FungiDB:FGRAMPH1_01G01283"/>
<dbReference type="eggNOG" id="KOG1709">
    <property type="taxonomic scope" value="Eukaryota"/>
</dbReference>
<dbReference type="HOGENOM" id="CLU_033831_0_1_1"/>
<dbReference type="InParanoid" id="Q4IQK7"/>
<dbReference type="OrthoDB" id="19486at110618"/>
<dbReference type="Proteomes" id="UP000070720">
    <property type="component" value="Chromosome 1"/>
</dbReference>
<dbReference type="GO" id="GO:0005737">
    <property type="term" value="C:cytoplasm"/>
    <property type="evidence" value="ECO:0007669"/>
    <property type="project" value="UniProtKB-SubCell"/>
</dbReference>
<dbReference type="GO" id="GO:0005634">
    <property type="term" value="C:nucleus"/>
    <property type="evidence" value="ECO:0007669"/>
    <property type="project" value="UniProtKB-SubCell"/>
</dbReference>
<dbReference type="GO" id="GO:0019702">
    <property type="term" value="F:protein arginine N5-methyltransferase activity"/>
    <property type="evidence" value="ECO:0007669"/>
    <property type="project" value="TreeGrafter"/>
</dbReference>
<dbReference type="GO" id="GO:0032259">
    <property type="term" value="P:methylation"/>
    <property type="evidence" value="ECO:0007669"/>
    <property type="project" value="UniProtKB-KW"/>
</dbReference>
<dbReference type="Gene3D" id="1.25.40.20">
    <property type="entry name" value="Ankyrin repeat-containing domain"/>
    <property type="match status" value="1"/>
</dbReference>
<dbReference type="Gene3D" id="3.40.50.150">
    <property type="entry name" value="Vaccinia Virus protein VP39"/>
    <property type="match status" value="1"/>
</dbReference>
<dbReference type="InterPro" id="IPR036770">
    <property type="entry name" value="Ankyrin_rpt-contain_sf"/>
</dbReference>
<dbReference type="InterPro" id="IPR017408">
    <property type="entry name" value="Arginine_N-MeTrfase_2"/>
</dbReference>
<dbReference type="InterPro" id="IPR051038">
    <property type="entry name" value="RMT2/GAMT_Mtase"/>
</dbReference>
<dbReference type="InterPro" id="IPR026480">
    <property type="entry name" value="RMT2_dom"/>
</dbReference>
<dbReference type="InterPro" id="IPR029063">
    <property type="entry name" value="SAM-dependent_MTases_sf"/>
</dbReference>
<dbReference type="PANTHER" id="PTHR32379">
    <property type="entry name" value="GUANIDINOACETATE N-METHYLTRANSFERASE"/>
    <property type="match status" value="1"/>
</dbReference>
<dbReference type="PANTHER" id="PTHR32379:SF1">
    <property type="entry name" value="GUANIDINOACETATE N-METHYLTRANSFERASE"/>
    <property type="match status" value="1"/>
</dbReference>
<dbReference type="PIRSF" id="PIRSF038148">
    <property type="entry name" value="Arginine_N-mtfrase-2"/>
    <property type="match status" value="1"/>
</dbReference>
<dbReference type="SUPFAM" id="SSF48403">
    <property type="entry name" value="Ankyrin repeat"/>
    <property type="match status" value="1"/>
</dbReference>
<dbReference type="SUPFAM" id="SSF53335">
    <property type="entry name" value="S-adenosyl-L-methionine-dependent methyltransferases"/>
    <property type="match status" value="1"/>
</dbReference>
<dbReference type="PROSITE" id="PS51559">
    <property type="entry name" value="SAM_RMT2"/>
    <property type="match status" value="1"/>
</dbReference>
<gene>
    <name evidence="1" type="primary">RMT2</name>
    <name type="ORF">FGRAMPH1_01T01283</name>
    <name type="ORF">FGRRES_00501</name>
    <name type="ORF">FGSG_00501</name>
</gene>
<comment type="function">
    <text evidence="1">S-adenosyl-L-methionine-dependent protein-arginine N-methyltransferase that methylates the delta-nitrogen atom of arginine residues to form N5-methylarginine (type IV) in target proteins. Monomethylates ribosomal protein L12.</text>
</comment>
<comment type="subunit">
    <text evidence="1">Monomer.</text>
</comment>
<comment type="subcellular location">
    <subcellularLocation>
        <location evidence="1">Cytoplasm</location>
    </subcellularLocation>
    <subcellularLocation>
        <location evidence="1">Nucleus</location>
    </subcellularLocation>
</comment>
<comment type="similarity">
    <text evidence="2">Belongs to the class I-like SAM-binding methyltransferase superfamily. RMT2 methyltransferase family.</text>
</comment>
<organism>
    <name type="scientific">Gibberella zeae (strain ATCC MYA-4620 / CBS 123657 / FGSC 9075 / NRRL 31084 / PH-1)</name>
    <name type="common">Wheat head blight fungus</name>
    <name type="synonym">Fusarium graminearum</name>
    <dbReference type="NCBI Taxonomy" id="229533"/>
    <lineage>
        <taxon>Eukaryota</taxon>
        <taxon>Fungi</taxon>
        <taxon>Dikarya</taxon>
        <taxon>Ascomycota</taxon>
        <taxon>Pezizomycotina</taxon>
        <taxon>Sordariomycetes</taxon>
        <taxon>Hypocreomycetidae</taxon>
        <taxon>Hypocreales</taxon>
        <taxon>Nectriaceae</taxon>
        <taxon>Fusarium</taxon>
    </lineage>
</organism>
<sequence length="440" mass="48952">MAATTSKIDDSMPARISSDCPEEIREVLYYAWGHDRSGLKKLLKTTGKATAQDPKTGETPLHAAIRACGPASPDDDGQEEDGSVEEAKDIVHDLFLQGAIWNDVDSNNETPGCLALRLGRKSLYQLCIEAGVRAELLFALMGDYEELSSGSEDGDEEMEVQQDDDEEAPQLVSTEDVEPTVEEPKFIPPDAKEKQVTSEEYLNSKLVYDDAKLVDSDLNGVMMAWETDIMRRSVAALIPDSAPGKRILNIGFGMGIVDGMFAELKPSRHHIIEAHPSVLEHLSKDESKFGPSWEKSGPEEGAFKVHKGKWQDIVPKLLEDGEIYDAIYFDTFGEDYSQLRYFFSECIIGIMDQEGKFSFFNGLGADRKICYDVYTKVVEMQCADAGLDVEWEESDVDMSGLEKAGEGEWEGVRRRYWTLDSKSFEGAAVLRYAVGTSNRL</sequence>
<keyword id="KW-0963">Cytoplasm</keyword>
<keyword id="KW-0489">Methyltransferase</keyword>
<keyword id="KW-0539">Nucleus</keyword>
<keyword id="KW-1185">Reference proteome</keyword>
<keyword id="KW-0949">S-adenosyl-L-methionine</keyword>
<keyword id="KW-0808">Transferase</keyword>
<reference key="1">
    <citation type="journal article" date="2007" name="Science">
        <title>The Fusarium graminearum genome reveals a link between localized polymorphism and pathogen specialization.</title>
        <authorList>
            <person name="Cuomo C.A."/>
            <person name="Gueldener U."/>
            <person name="Xu J.-R."/>
            <person name="Trail F."/>
            <person name="Turgeon B.G."/>
            <person name="Di Pietro A."/>
            <person name="Walton J.D."/>
            <person name="Ma L.-J."/>
            <person name="Baker S.E."/>
            <person name="Rep M."/>
            <person name="Adam G."/>
            <person name="Antoniw J."/>
            <person name="Baldwin T."/>
            <person name="Calvo S.E."/>
            <person name="Chang Y.-L."/>
            <person name="DeCaprio D."/>
            <person name="Gale L.R."/>
            <person name="Gnerre S."/>
            <person name="Goswami R.S."/>
            <person name="Hammond-Kosack K."/>
            <person name="Harris L.J."/>
            <person name="Hilburn K."/>
            <person name="Kennell J.C."/>
            <person name="Kroken S."/>
            <person name="Magnuson J.K."/>
            <person name="Mannhaupt G."/>
            <person name="Mauceli E.W."/>
            <person name="Mewes H.-W."/>
            <person name="Mitterbauer R."/>
            <person name="Muehlbauer G."/>
            <person name="Muensterkoetter M."/>
            <person name="Nelson D."/>
            <person name="O'Donnell K."/>
            <person name="Ouellet T."/>
            <person name="Qi W."/>
            <person name="Quesneville H."/>
            <person name="Roncero M.I.G."/>
            <person name="Seong K.-Y."/>
            <person name="Tetko I.V."/>
            <person name="Urban M."/>
            <person name="Waalwijk C."/>
            <person name="Ward T.J."/>
            <person name="Yao J."/>
            <person name="Birren B.W."/>
            <person name="Kistler H.C."/>
        </authorList>
    </citation>
    <scope>NUCLEOTIDE SEQUENCE [LARGE SCALE GENOMIC DNA]</scope>
    <source>
        <strain>ATCC MYA-4620 / CBS 123657 / FGSC 9075 / NRRL 31084 / PH-1</strain>
    </source>
</reference>
<reference key="2">
    <citation type="journal article" date="2010" name="Nature">
        <title>Comparative genomics reveals mobile pathogenicity chromosomes in Fusarium.</title>
        <authorList>
            <person name="Ma L.-J."/>
            <person name="van der Does H.C."/>
            <person name="Borkovich K.A."/>
            <person name="Coleman J.J."/>
            <person name="Daboussi M.-J."/>
            <person name="Di Pietro A."/>
            <person name="Dufresne M."/>
            <person name="Freitag M."/>
            <person name="Grabherr M."/>
            <person name="Henrissat B."/>
            <person name="Houterman P.M."/>
            <person name="Kang S."/>
            <person name="Shim W.-B."/>
            <person name="Woloshuk C."/>
            <person name="Xie X."/>
            <person name="Xu J.-R."/>
            <person name="Antoniw J."/>
            <person name="Baker S.E."/>
            <person name="Bluhm B.H."/>
            <person name="Breakspear A."/>
            <person name="Brown D.W."/>
            <person name="Butchko R.A.E."/>
            <person name="Chapman S."/>
            <person name="Coulson R."/>
            <person name="Coutinho P.M."/>
            <person name="Danchin E.G.J."/>
            <person name="Diener A."/>
            <person name="Gale L.R."/>
            <person name="Gardiner D.M."/>
            <person name="Goff S."/>
            <person name="Hammond-Kosack K.E."/>
            <person name="Hilburn K."/>
            <person name="Hua-Van A."/>
            <person name="Jonkers W."/>
            <person name="Kazan K."/>
            <person name="Kodira C.D."/>
            <person name="Koehrsen M."/>
            <person name="Kumar L."/>
            <person name="Lee Y.-H."/>
            <person name="Li L."/>
            <person name="Manners J.M."/>
            <person name="Miranda-Saavedra D."/>
            <person name="Mukherjee M."/>
            <person name="Park G."/>
            <person name="Park J."/>
            <person name="Park S.-Y."/>
            <person name="Proctor R.H."/>
            <person name="Regev A."/>
            <person name="Ruiz-Roldan M.C."/>
            <person name="Sain D."/>
            <person name="Sakthikumar S."/>
            <person name="Sykes S."/>
            <person name="Schwartz D.C."/>
            <person name="Turgeon B.G."/>
            <person name="Wapinski I."/>
            <person name="Yoder O."/>
            <person name="Young S."/>
            <person name="Zeng Q."/>
            <person name="Zhou S."/>
            <person name="Galagan J."/>
            <person name="Cuomo C.A."/>
            <person name="Kistler H.C."/>
            <person name="Rep M."/>
        </authorList>
    </citation>
    <scope>GENOME REANNOTATION</scope>
    <source>
        <strain>ATCC MYA-4620 / CBS 123657 / FGSC 9075 / NRRL 31084 / PH-1</strain>
    </source>
</reference>
<reference key="3">
    <citation type="journal article" date="2015" name="BMC Genomics">
        <title>The completed genome sequence of the pathogenic ascomycete fungus Fusarium graminearum.</title>
        <authorList>
            <person name="King R."/>
            <person name="Urban M."/>
            <person name="Hammond-Kosack M.C.U."/>
            <person name="Hassani-Pak K."/>
            <person name="Hammond-Kosack K.E."/>
        </authorList>
    </citation>
    <scope>NUCLEOTIDE SEQUENCE [LARGE SCALE GENOMIC DNA]</scope>
    <source>
        <strain>ATCC MYA-4620 / CBS 123657 / FGSC 9075 / NRRL 31084 / PH-1</strain>
    </source>
</reference>
<protein>
    <recommendedName>
        <fullName evidence="1">Protein arginine N-methyltransferase 2</fullName>
        <ecNumber evidence="1">2.1.1.-</ecNumber>
    </recommendedName>
    <alternativeName>
        <fullName evidence="1">Protein-arginine N5-methyltransferase</fullName>
    </alternativeName>
    <alternativeName>
        <fullName evidence="1">Type IV protein arginine N-methyltransferase</fullName>
        <shortName evidence="1">Type IV PRMT</shortName>
    </alternativeName>
</protein>
<accession>Q4IQK7</accession>
<accession>A0A0E0RMG7</accession>
<accession>A0A1C3YHR1</accession>
<accession>V6R1E4</accession>
<proteinExistence type="inferred from homology"/>